<reference key="1">
    <citation type="journal article" date="2007" name="Archaea">
        <title>The genome of Hyperthermus butylicus: a sulfur-reducing, peptide fermenting, neutrophilic Crenarchaeote growing up to 108 degrees C.</title>
        <authorList>
            <person name="Bruegger K."/>
            <person name="Chen L."/>
            <person name="Stark M."/>
            <person name="Zibat A."/>
            <person name="Redder P."/>
            <person name="Ruepp A."/>
            <person name="Awayez M."/>
            <person name="She Q."/>
            <person name="Garrett R.A."/>
            <person name="Klenk H.-P."/>
        </authorList>
    </citation>
    <scope>NUCLEOTIDE SEQUENCE [LARGE SCALE GENOMIC DNA]</scope>
    <source>
        <strain>DSM 5456 / JCM 9403 / PLM1-5</strain>
    </source>
</reference>
<organism>
    <name type="scientific">Hyperthermus butylicus (strain DSM 5456 / JCM 9403 / PLM1-5)</name>
    <dbReference type="NCBI Taxonomy" id="415426"/>
    <lineage>
        <taxon>Archaea</taxon>
        <taxon>Thermoproteota</taxon>
        <taxon>Thermoprotei</taxon>
        <taxon>Desulfurococcales</taxon>
        <taxon>Pyrodictiaceae</taxon>
        <taxon>Hyperthermus</taxon>
    </lineage>
</organism>
<accession>A2BK95</accession>
<gene>
    <name evidence="1" type="primary">rps28e</name>
    <name type="ordered locus">Hbut_0546</name>
</gene>
<comment type="similarity">
    <text evidence="1">Belongs to the eukaryotic ribosomal protein eS28 family.</text>
</comment>
<protein>
    <recommendedName>
        <fullName evidence="1">Small ribosomal subunit protein eS28</fullName>
    </recommendedName>
    <alternativeName>
        <fullName evidence="2">30S ribosomal protein S28e</fullName>
    </alternativeName>
</protein>
<keyword id="KW-1185">Reference proteome</keyword>
<keyword id="KW-0687">Ribonucleoprotein</keyword>
<keyword id="KW-0689">Ribosomal protein</keyword>
<proteinExistence type="inferred from homology"/>
<sequence length="81" mass="9387">MSQRKEKEFNIIEEIGYPAEVIQIIGRTGVHGEVIQVRVRVLEGRDKGRVLTRNVLGPVRLGDIVILRETEREARRLGRRR</sequence>
<feature type="chain" id="PRO_1000194310" description="Small ribosomal subunit protein eS28">
    <location>
        <begin position="1"/>
        <end position="81"/>
    </location>
</feature>
<evidence type="ECO:0000255" key="1">
    <source>
        <dbReference type="HAMAP-Rule" id="MF_00292"/>
    </source>
</evidence>
<evidence type="ECO:0000305" key="2"/>
<name>RS28_HYPBU</name>
<dbReference type="EMBL" id="CP000493">
    <property type="protein sequence ID" value="ABM80406.1"/>
    <property type="molecule type" value="Genomic_DNA"/>
</dbReference>
<dbReference type="RefSeq" id="WP_011821724.1">
    <property type="nucleotide sequence ID" value="NC_008818.1"/>
</dbReference>
<dbReference type="SMR" id="A2BK95"/>
<dbReference type="STRING" id="415426.Hbut_0546"/>
<dbReference type="EnsemblBacteria" id="ABM80406">
    <property type="protein sequence ID" value="ABM80406"/>
    <property type="gene ID" value="Hbut_0546"/>
</dbReference>
<dbReference type="GeneID" id="4782119"/>
<dbReference type="KEGG" id="hbu:Hbut_0546"/>
<dbReference type="eggNOG" id="arCOG04314">
    <property type="taxonomic scope" value="Archaea"/>
</dbReference>
<dbReference type="HOGENOM" id="CLU_178987_2_0_2"/>
<dbReference type="OrthoDB" id="7620at2157"/>
<dbReference type="Proteomes" id="UP000002593">
    <property type="component" value="Chromosome"/>
</dbReference>
<dbReference type="GO" id="GO:0022627">
    <property type="term" value="C:cytosolic small ribosomal subunit"/>
    <property type="evidence" value="ECO:0007669"/>
    <property type="project" value="TreeGrafter"/>
</dbReference>
<dbReference type="GO" id="GO:0003735">
    <property type="term" value="F:structural constituent of ribosome"/>
    <property type="evidence" value="ECO:0007669"/>
    <property type="project" value="InterPro"/>
</dbReference>
<dbReference type="GO" id="GO:0030490">
    <property type="term" value="P:maturation of SSU-rRNA"/>
    <property type="evidence" value="ECO:0007669"/>
    <property type="project" value="TreeGrafter"/>
</dbReference>
<dbReference type="GO" id="GO:0000028">
    <property type="term" value="P:ribosomal small subunit assembly"/>
    <property type="evidence" value="ECO:0007669"/>
    <property type="project" value="TreeGrafter"/>
</dbReference>
<dbReference type="GO" id="GO:0006412">
    <property type="term" value="P:translation"/>
    <property type="evidence" value="ECO:0007669"/>
    <property type="project" value="UniProtKB-UniRule"/>
</dbReference>
<dbReference type="FunFam" id="2.40.50.140:FF:000145">
    <property type="entry name" value="30S ribosomal protein S28e"/>
    <property type="match status" value="1"/>
</dbReference>
<dbReference type="Gene3D" id="2.40.50.140">
    <property type="entry name" value="Nucleic acid-binding proteins"/>
    <property type="match status" value="1"/>
</dbReference>
<dbReference type="HAMAP" id="MF_00292">
    <property type="entry name" value="Ribosomal_eS28"/>
    <property type="match status" value="1"/>
</dbReference>
<dbReference type="InterPro" id="IPR012340">
    <property type="entry name" value="NA-bd_OB-fold"/>
</dbReference>
<dbReference type="InterPro" id="IPR000289">
    <property type="entry name" value="Ribosomal_eS28"/>
</dbReference>
<dbReference type="InterPro" id="IPR028626">
    <property type="entry name" value="Ribosomal_eS28_CS"/>
</dbReference>
<dbReference type="NCBIfam" id="NF003080">
    <property type="entry name" value="PRK04007.1"/>
    <property type="match status" value="1"/>
</dbReference>
<dbReference type="PANTHER" id="PTHR10769">
    <property type="entry name" value="40S RIBOSOMAL PROTEIN S28"/>
    <property type="match status" value="1"/>
</dbReference>
<dbReference type="PANTHER" id="PTHR10769:SF3">
    <property type="entry name" value="SMALL RIBOSOMAL SUBUNIT PROTEIN ES28"/>
    <property type="match status" value="1"/>
</dbReference>
<dbReference type="Pfam" id="PF01200">
    <property type="entry name" value="Ribosomal_S28e"/>
    <property type="match status" value="1"/>
</dbReference>
<dbReference type="SUPFAM" id="SSF50249">
    <property type="entry name" value="Nucleic acid-binding proteins"/>
    <property type="match status" value="1"/>
</dbReference>
<dbReference type="PROSITE" id="PS00961">
    <property type="entry name" value="RIBOSOMAL_S28E"/>
    <property type="match status" value="1"/>
</dbReference>